<reference key="1">
    <citation type="journal article" date="2001" name="Genome Res.">
        <title>The complete genome sequence of the lactic acid bacterium Lactococcus lactis ssp. lactis IL1403.</title>
        <authorList>
            <person name="Bolotin A."/>
            <person name="Wincker P."/>
            <person name="Mauger S."/>
            <person name="Jaillon O."/>
            <person name="Malarme K."/>
            <person name="Weissenbach J."/>
            <person name="Ehrlich S.D."/>
            <person name="Sorokin A."/>
        </authorList>
    </citation>
    <scope>NUCLEOTIDE SEQUENCE [LARGE SCALE GENOMIC DNA]</scope>
    <source>
        <strain>IL1403</strain>
    </source>
</reference>
<keyword id="KW-0963">Cytoplasm</keyword>
<keyword id="KW-0235">DNA replication</keyword>
<keyword id="KW-0236">DNA replication inhibitor</keyword>
<keyword id="KW-0479">Metal-binding</keyword>
<keyword id="KW-1185">Reference proteome</keyword>
<keyword id="KW-0862">Zinc</keyword>
<dbReference type="EMBL" id="AE005176">
    <property type="protein sequence ID" value="AAK04499.1"/>
    <property type="molecule type" value="Genomic_DNA"/>
</dbReference>
<dbReference type="PIR" id="A86675">
    <property type="entry name" value="A86675"/>
</dbReference>
<dbReference type="RefSeq" id="NP_266557.1">
    <property type="nucleotide sequence ID" value="NC_002662.1"/>
</dbReference>
<dbReference type="RefSeq" id="WP_010905317.1">
    <property type="nucleotide sequence ID" value="NC_002662.1"/>
</dbReference>
<dbReference type="SMR" id="Q9CIG1"/>
<dbReference type="PaxDb" id="272623-L6328"/>
<dbReference type="EnsemblBacteria" id="AAK04499">
    <property type="protein sequence ID" value="AAK04499"/>
    <property type="gene ID" value="L6328"/>
</dbReference>
<dbReference type="KEGG" id="lla:L6328"/>
<dbReference type="PATRIC" id="fig|272623.7.peg.435"/>
<dbReference type="eggNOG" id="COG4467">
    <property type="taxonomic scope" value="Bacteria"/>
</dbReference>
<dbReference type="HOGENOM" id="CLU_157169_0_0_9"/>
<dbReference type="OrthoDB" id="2112130at2"/>
<dbReference type="Proteomes" id="UP000002196">
    <property type="component" value="Chromosome"/>
</dbReference>
<dbReference type="GO" id="GO:0009295">
    <property type="term" value="C:nucleoid"/>
    <property type="evidence" value="ECO:0007669"/>
    <property type="project" value="UniProtKB-SubCell"/>
</dbReference>
<dbReference type="GO" id="GO:0006260">
    <property type="term" value="P:DNA replication"/>
    <property type="evidence" value="ECO:0007669"/>
    <property type="project" value="UniProtKB-UniRule"/>
</dbReference>
<dbReference type="HAMAP" id="MF_01159">
    <property type="entry name" value="YabA"/>
    <property type="match status" value="1"/>
</dbReference>
<dbReference type="InterPro" id="IPR010377">
    <property type="entry name" value="YabA"/>
</dbReference>
<dbReference type="NCBIfam" id="NF009642">
    <property type="entry name" value="PRK13169.1-3"/>
    <property type="match status" value="1"/>
</dbReference>
<dbReference type="Pfam" id="PF06156">
    <property type="entry name" value="YabA"/>
    <property type="match status" value="1"/>
</dbReference>
<dbReference type="PIRSF" id="PIRSF021439">
    <property type="entry name" value="DUF972"/>
    <property type="match status" value="1"/>
</dbReference>
<evidence type="ECO:0000255" key="1">
    <source>
        <dbReference type="HAMAP-Rule" id="MF_01159"/>
    </source>
</evidence>
<organism>
    <name type="scientific">Lactococcus lactis subsp. lactis (strain IL1403)</name>
    <name type="common">Streptococcus lactis</name>
    <dbReference type="NCBI Taxonomy" id="272623"/>
    <lineage>
        <taxon>Bacteria</taxon>
        <taxon>Bacillati</taxon>
        <taxon>Bacillota</taxon>
        <taxon>Bacilli</taxon>
        <taxon>Lactobacillales</taxon>
        <taxon>Streptococcaceae</taxon>
        <taxon>Lactococcus</taxon>
    </lineage>
</organism>
<accession>Q9CIG1</accession>
<gene>
    <name evidence="1" type="primary">yabA</name>
    <name type="synonym">yeaD</name>
    <name type="ordered locus">LL0401</name>
    <name type="ORF">L6328</name>
</gene>
<protein>
    <recommendedName>
        <fullName evidence="1">Replication initiation control protein YabA</fullName>
    </recommendedName>
</protein>
<comment type="function">
    <text evidence="1">Involved in control of chromosome replication initiation. Inhibits the cooperative binding of DnaA to the oriC region, thus negatively regulating initiation of chromosome replication. Inhibits the ability of DnaA-ATP to form a helix on DNA; does not disassemble preformed DnaA-DNA helices. Decreases the residence time of DnaA on the chromosome at its binding sites (oriC, replication forks and promoter-binding sites). Tethers DnaA to the replication machinery via the DNA polymerase beta sliding clamp subunit (dnaN). Associates with oriC and other DnaA targets on the chromosome in a DnaA-dependent manner.</text>
</comment>
<comment type="cofactor">
    <cofactor evidence="1">
        <name>Zn(2+)</name>
        <dbReference type="ChEBI" id="CHEBI:29105"/>
    </cofactor>
    <text evidence="1">Binds 1 zinc ion per subunit.</text>
</comment>
<comment type="subunit">
    <text evidence="1">Homotetramer. Interacts with both DnaA and DnaN, acting as a bridge between these two proteins.</text>
</comment>
<comment type="subcellular location">
    <subcellularLocation>
        <location evidence="1">Cytoplasm</location>
        <location evidence="1">Nucleoid</location>
    </subcellularLocation>
    <text evidence="1">Localizes in tight foci, which correspond to the replisome at mid-cell throughout the cell cycle.</text>
</comment>
<comment type="similarity">
    <text evidence="1">Belongs to the YabA family.</text>
</comment>
<feature type="chain" id="PRO_0000211909" description="Replication initiation control protein YabA">
    <location>
        <begin position="1"/>
        <end position="108"/>
    </location>
</feature>
<feature type="binding site" evidence="1">
    <location>
        <position position="83"/>
    </location>
    <ligand>
        <name>Zn(2+)</name>
        <dbReference type="ChEBI" id="CHEBI:29105"/>
    </ligand>
</feature>
<feature type="binding site" evidence="1">
    <location>
        <position position="85"/>
    </location>
    <ligand>
        <name>Zn(2+)</name>
        <dbReference type="ChEBI" id="CHEBI:29105"/>
    </ligand>
</feature>
<feature type="binding site" evidence="1">
    <location>
        <position position="99"/>
    </location>
    <ligand>
        <name>Zn(2+)</name>
        <dbReference type="ChEBI" id="CHEBI:29105"/>
    </ligand>
</feature>
<feature type="binding site" evidence="1">
    <location>
        <position position="102"/>
    </location>
    <ligand>
        <name>Zn(2+)</name>
        <dbReference type="ChEBI" id="CHEBI:29105"/>
    </ligand>
</feature>
<sequence length="108" mass="12587">MADKYNVFDQLGELENTLNTTLTQISGIRQVLESSMTENATLRMELEKLRDRLAEFEKKEVKKETPKDQPNPNLIQIFNEGFHVCHLHYAERLAEGESCLDCLELLYR</sequence>
<proteinExistence type="inferred from homology"/>
<name>YABA_LACLA</name>